<proteinExistence type="inferred from homology"/>
<evidence type="ECO:0000255" key="1">
    <source>
        <dbReference type="HAMAP-Rule" id="MF_00129"/>
    </source>
</evidence>
<sequence length="630" mass="69284">MDFPSRFEVIVIGGGHAGTEAALASARMGVKTLLLTHNVETLGHMSCNPAIGGIGKSHLVKEIDALGGAMALATDKSGIQFRVLNNRKGPAVRATRAQADRAIYKAVVREILENQPNLWIFQQSCDDLIVEQDQVKGVVTQMGLRFFADSVVLTTGTFLGGLIHIGLQNHSGGRAGDPPSIALAHRMRELPLRVGRLKTGTPPRIDGRSVDFSVMTEQPGDTPIPVMSFMGNAAMHPRQVSCWITHTNARTHEIIASNLDRSPMYSGVIEGVGPRYCPSIEDKIHRFADKESHQVFIEPEGLTTHELYPNGISTSLPFDVQLELVRSIRGMENAHIVRPGYAIEYDYFDPRDLKYSLETKVIGGLFFAGQINGTTGYEEAGAQGLLAGTNAALRAQGRESWCPRRDEAYIGVLVDDLITLGTQEPYRMFTSRAEYRLILREDNADLRLTEKGRELGLIDDQRWAAFCAKRDGIEREEQRLKSTWVRPNTPQGQAVVDKFGTPLSHEYSLLNLLARPEVDYAGLIEATGGEQIDPQVAEQVEIKTKYAGYIDRQQDEIARLRASEDTCLPVDIDYTSISGLSKEIQGKLGQTRPQTLGQASRIPGVTPAAISLLLIHLKKRGAGRELEQSA</sequence>
<feature type="chain" id="PRO_0000345319" description="tRNA uridine 5-carboxymethylaminomethyl modification enzyme MnmG">
    <location>
        <begin position="1"/>
        <end position="630"/>
    </location>
</feature>
<feature type="binding site" evidence="1">
    <location>
        <begin position="13"/>
        <end position="18"/>
    </location>
    <ligand>
        <name>FAD</name>
        <dbReference type="ChEBI" id="CHEBI:57692"/>
    </ligand>
</feature>
<feature type="binding site" evidence="1">
    <location>
        <begin position="273"/>
        <end position="287"/>
    </location>
    <ligand>
        <name>NAD(+)</name>
        <dbReference type="ChEBI" id="CHEBI:57540"/>
    </ligand>
</feature>
<comment type="function">
    <text evidence="1">NAD-binding protein involved in the addition of a carboxymethylaminomethyl (cmnm) group at the wobble position (U34) of certain tRNAs, forming tRNA-cmnm(5)s(2)U34.</text>
</comment>
<comment type="cofactor">
    <cofactor evidence="1">
        <name>FAD</name>
        <dbReference type="ChEBI" id="CHEBI:57692"/>
    </cofactor>
</comment>
<comment type="subunit">
    <text evidence="1">Homodimer. Heterotetramer of two MnmE and two MnmG subunits.</text>
</comment>
<comment type="subcellular location">
    <subcellularLocation>
        <location evidence="1">Cytoplasm</location>
    </subcellularLocation>
</comment>
<comment type="similarity">
    <text evidence="1">Belongs to the MnmG family.</text>
</comment>
<organism>
    <name type="scientific">Pseudomonas putida (strain W619)</name>
    <dbReference type="NCBI Taxonomy" id="390235"/>
    <lineage>
        <taxon>Bacteria</taxon>
        <taxon>Pseudomonadati</taxon>
        <taxon>Pseudomonadota</taxon>
        <taxon>Gammaproteobacteria</taxon>
        <taxon>Pseudomonadales</taxon>
        <taxon>Pseudomonadaceae</taxon>
        <taxon>Pseudomonas</taxon>
    </lineage>
</organism>
<gene>
    <name evidence="1" type="primary">mnmG</name>
    <name evidence="1" type="synonym">gidA</name>
    <name type="ordered locus">PputW619_5211</name>
</gene>
<accession>B1JFV2</accession>
<reference key="1">
    <citation type="submission" date="2008-02" db="EMBL/GenBank/DDBJ databases">
        <title>Complete sequence of Pseudomonas putida W619.</title>
        <authorList>
            <person name="Copeland A."/>
            <person name="Lucas S."/>
            <person name="Lapidus A."/>
            <person name="Barry K."/>
            <person name="Detter J.C."/>
            <person name="Glavina del Rio T."/>
            <person name="Dalin E."/>
            <person name="Tice H."/>
            <person name="Pitluck S."/>
            <person name="Chain P."/>
            <person name="Malfatti S."/>
            <person name="Shin M."/>
            <person name="Vergez L."/>
            <person name="Schmutz J."/>
            <person name="Larimer F."/>
            <person name="Land M."/>
            <person name="Hauser L."/>
            <person name="Kyrpides N."/>
            <person name="Kim E."/>
            <person name="Taghavi S."/>
            <person name="Vangronsveld D."/>
            <person name="van der Lelie D."/>
            <person name="Richardson P."/>
        </authorList>
    </citation>
    <scope>NUCLEOTIDE SEQUENCE [LARGE SCALE GENOMIC DNA]</scope>
    <source>
        <strain>W619</strain>
    </source>
</reference>
<keyword id="KW-0963">Cytoplasm</keyword>
<keyword id="KW-0274">FAD</keyword>
<keyword id="KW-0285">Flavoprotein</keyword>
<keyword id="KW-0520">NAD</keyword>
<keyword id="KW-0819">tRNA processing</keyword>
<name>MNMG_PSEPW</name>
<protein>
    <recommendedName>
        <fullName evidence="1">tRNA uridine 5-carboxymethylaminomethyl modification enzyme MnmG</fullName>
    </recommendedName>
    <alternativeName>
        <fullName evidence="1">Glucose-inhibited division protein A</fullName>
    </alternativeName>
</protein>
<dbReference type="EMBL" id="CP000949">
    <property type="protein sequence ID" value="ACA75686.1"/>
    <property type="molecule type" value="Genomic_DNA"/>
</dbReference>
<dbReference type="SMR" id="B1JFV2"/>
<dbReference type="STRING" id="390235.PputW619_5211"/>
<dbReference type="KEGG" id="ppw:PputW619_5211"/>
<dbReference type="eggNOG" id="COG0445">
    <property type="taxonomic scope" value="Bacteria"/>
</dbReference>
<dbReference type="HOGENOM" id="CLU_007831_2_2_6"/>
<dbReference type="OrthoDB" id="9815560at2"/>
<dbReference type="GO" id="GO:0005829">
    <property type="term" value="C:cytosol"/>
    <property type="evidence" value="ECO:0007669"/>
    <property type="project" value="TreeGrafter"/>
</dbReference>
<dbReference type="GO" id="GO:0050660">
    <property type="term" value="F:flavin adenine dinucleotide binding"/>
    <property type="evidence" value="ECO:0007669"/>
    <property type="project" value="UniProtKB-UniRule"/>
</dbReference>
<dbReference type="GO" id="GO:0030488">
    <property type="term" value="P:tRNA methylation"/>
    <property type="evidence" value="ECO:0007669"/>
    <property type="project" value="TreeGrafter"/>
</dbReference>
<dbReference type="GO" id="GO:0002098">
    <property type="term" value="P:tRNA wobble uridine modification"/>
    <property type="evidence" value="ECO:0007669"/>
    <property type="project" value="InterPro"/>
</dbReference>
<dbReference type="FunFam" id="1.10.10.1800:FF:000001">
    <property type="entry name" value="tRNA uridine 5-carboxymethylaminomethyl modification enzyme MnmG"/>
    <property type="match status" value="1"/>
</dbReference>
<dbReference type="FunFam" id="1.10.150.570:FF:000001">
    <property type="entry name" value="tRNA uridine 5-carboxymethylaminomethyl modification enzyme MnmG"/>
    <property type="match status" value="1"/>
</dbReference>
<dbReference type="FunFam" id="3.50.50.60:FF:000002">
    <property type="entry name" value="tRNA uridine 5-carboxymethylaminomethyl modification enzyme MnmG"/>
    <property type="match status" value="1"/>
</dbReference>
<dbReference type="FunFam" id="3.50.50.60:FF:000010">
    <property type="entry name" value="tRNA uridine 5-carboxymethylaminomethyl modification enzyme MnmG"/>
    <property type="match status" value="1"/>
</dbReference>
<dbReference type="Gene3D" id="3.50.50.60">
    <property type="entry name" value="FAD/NAD(P)-binding domain"/>
    <property type="match status" value="2"/>
</dbReference>
<dbReference type="Gene3D" id="1.10.150.570">
    <property type="entry name" value="GidA associated domain, C-terminal subdomain"/>
    <property type="match status" value="1"/>
</dbReference>
<dbReference type="Gene3D" id="1.10.10.1800">
    <property type="entry name" value="tRNA uridine 5-carboxymethylaminomethyl modification enzyme MnmG/GidA"/>
    <property type="match status" value="1"/>
</dbReference>
<dbReference type="HAMAP" id="MF_00129">
    <property type="entry name" value="MnmG_GidA"/>
    <property type="match status" value="1"/>
</dbReference>
<dbReference type="InterPro" id="IPR036188">
    <property type="entry name" value="FAD/NAD-bd_sf"/>
</dbReference>
<dbReference type="InterPro" id="IPR049312">
    <property type="entry name" value="GIDA_C_N"/>
</dbReference>
<dbReference type="InterPro" id="IPR004416">
    <property type="entry name" value="MnmG"/>
</dbReference>
<dbReference type="InterPro" id="IPR002218">
    <property type="entry name" value="MnmG-rel"/>
</dbReference>
<dbReference type="InterPro" id="IPR020595">
    <property type="entry name" value="MnmG-rel_CS"/>
</dbReference>
<dbReference type="InterPro" id="IPR026904">
    <property type="entry name" value="MnmG_C"/>
</dbReference>
<dbReference type="InterPro" id="IPR047001">
    <property type="entry name" value="MnmG_C_subdom"/>
</dbReference>
<dbReference type="InterPro" id="IPR044920">
    <property type="entry name" value="MnmG_C_subdom_sf"/>
</dbReference>
<dbReference type="InterPro" id="IPR040131">
    <property type="entry name" value="MnmG_N"/>
</dbReference>
<dbReference type="NCBIfam" id="TIGR00136">
    <property type="entry name" value="mnmG_gidA"/>
    <property type="match status" value="1"/>
</dbReference>
<dbReference type="PANTHER" id="PTHR11806">
    <property type="entry name" value="GLUCOSE INHIBITED DIVISION PROTEIN A"/>
    <property type="match status" value="1"/>
</dbReference>
<dbReference type="PANTHER" id="PTHR11806:SF0">
    <property type="entry name" value="PROTEIN MTO1 HOMOLOG, MITOCHONDRIAL"/>
    <property type="match status" value="1"/>
</dbReference>
<dbReference type="Pfam" id="PF01134">
    <property type="entry name" value="GIDA"/>
    <property type="match status" value="1"/>
</dbReference>
<dbReference type="Pfam" id="PF21680">
    <property type="entry name" value="GIDA_C_1st"/>
    <property type="match status" value="1"/>
</dbReference>
<dbReference type="Pfam" id="PF13932">
    <property type="entry name" value="SAM_GIDA_C"/>
    <property type="match status" value="1"/>
</dbReference>
<dbReference type="SMART" id="SM01228">
    <property type="entry name" value="GIDA_assoc_3"/>
    <property type="match status" value="1"/>
</dbReference>
<dbReference type="SUPFAM" id="SSF51905">
    <property type="entry name" value="FAD/NAD(P)-binding domain"/>
    <property type="match status" value="1"/>
</dbReference>
<dbReference type="PROSITE" id="PS01280">
    <property type="entry name" value="GIDA_1"/>
    <property type="match status" value="1"/>
</dbReference>
<dbReference type="PROSITE" id="PS01281">
    <property type="entry name" value="GIDA_2"/>
    <property type="match status" value="1"/>
</dbReference>